<accession>A9R4G0</accession>
<evidence type="ECO:0000255" key="1">
    <source>
        <dbReference type="HAMAP-Rule" id="MF_00254"/>
    </source>
</evidence>
<dbReference type="EC" id="6.1.1.14" evidence="1"/>
<dbReference type="EMBL" id="CP000901">
    <property type="protein sequence ID" value="ABX87301.1"/>
    <property type="molecule type" value="Genomic_DNA"/>
</dbReference>
<dbReference type="RefSeq" id="WP_002209624.1">
    <property type="nucleotide sequence ID" value="NZ_CP009935.1"/>
</dbReference>
<dbReference type="SMR" id="A9R4G0"/>
<dbReference type="GeneID" id="96663419"/>
<dbReference type="KEGG" id="ypg:YpAngola_A3783"/>
<dbReference type="PATRIC" id="fig|349746.12.peg.496"/>
<dbReference type="GO" id="GO:0005829">
    <property type="term" value="C:cytosol"/>
    <property type="evidence" value="ECO:0007669"/>
    <property type="project" value="TreeGrafter"/>
</dbReference>
<dbReference type="GO" id="GO:0005524">
    <property type="term" value="F:ATP binding"/>
    <property type="evidence" value="ECO:0007669"/>
    <property type="project" value="UniProtKB-UniRule"/>
</dbReference>
<dbReference type="GO" id="GO:0004820">
    <property type="term" value="F:glycine-tRNA ligase activity"/>
    <property type="evidence" value="ECO:0007669"/>
    <property type="project" value="UniProtKB-UniRule"/>
</dbReference>
<dbReference type="GO" id="GO:0006426">
    <property type="term" value="P:glycyl-tRNA aminoacylation"/>
    <property type="evidence" value="ECO:0007669"/>
    <property type="project" value="UniProtKB-UniRule"/>
</dbReference>
<dbReference type="CDD" id="cd00733">
    <property type="entry name" value="GlyRS_alpha_core"/>
    <property type="match status" value="1"/>
</dbReference>
<dbReference type="FunFam" id="1.20.58.180:FF:000001">
    <property type="entry name" value="Glycine--tRNA ligase alpha subunit"/>
    <property type="match status" value="1"/>
</dbReference>
<dbReference type="FunFam" id="3.30.930.10:FF:000006">
    <property type="entry name" value="Glycine--tRNA ligase alpha subunit"/>
    <property type="match status" value="1"/>
</dbReference>
<dbReference type="Gene3D" id="3.30.930.10">
    <property type="entry name" value="Bira Bifunctional Protein, Domain 2"/>
    <property type="match status" value="1"/>
</dbReference>
<dbReference type="Gene3D" id="1.20.58.180">
    <property type="entry name" value="Class II aaRS and biotin synthetases, domain 2"/>
    <property type="match status" value="1"/>
</dbReference>
<dbReference type="HAMAP" id="MF_00254">
    <property type="entry name" value="Gly_tRNA_synth_alpha"/>
    <property type="match status" value="1"/>
</dbReference>
<dbReference type="InterPro" id="IPR045864">
    <property type="entry name" value="aa-tRNA-synth_II/BPL/LPL"/>
</dbReference>
<dbReference type="InterPro" id="IPR006194">
    <property type="entry name" value="Gly-tRNA-synth_heterodimer"/>
</dbReference>
<dbReference type="InterPro" id="IPR002310">
    <property type="entry name" value="Gly-tRNA_ligase_asu"/>
</dbReference>
<dbReference type="NCBIfam" id="TIGR00388">
    <property type="entry name" value="glyQ"/>
    <property type="match status" value="1"/>
</dbReference>
<dbReference type="NCBIfam" id="NF006827">
    <property type="entry name" value="PRK09348.1"/>
    <property type="match status" value="1"/>
</dbReference>
<dbReference type="PANTHER" id="PTHR30075:SF2">
    <property type="entry name" value="GLYCINE--TRNA LIGASE, CHLOROPLASTIC_MITOCHONDRIAL 2"/>
    <property type="match status" value="1"/>
</dbReference>
<dbReference type="PANTHER" id="PTHR30075">
    <property type="entry name" value="GLYCYL-TRNA SYNTHETASE"/>
    <property type="match status" value="1"/>
</dbReference>
<dbReference type="Pfam" id="PF02091">
    <property type="entry name" value="tRNA-synt_2e"/>
    <property type="match status" value="1"/>
</dbReference>
<dbReference type="PRINTS" id="PR01044">
    <property type="entry name" value="TRNASYNTHGA"/>
</dbReference>
<dbReference type="SUPFAM" id="SSF55681">
    <property type="entry name" value="Class II aaRS and biotin synthetases"/>
    <property type="match status" value="1"/>
</dbReference>
<dbReference type="PROSITE" id="PS50861">
    <property type="entry name" value="AA_TRNA_LIGASE_II_GLYAB"/>
    <property type="match status" value="1"/>
</dbReference>
<organism>
    <name type="scientific">Yersinia pestis bv. Antiqua (strain Angola)</name>
    <dbReference type="NCBI Taxonomy" id="349746"/>
    <lineage>
        <taxon>Bacteria</taxon>
        <taxon>Pseudomonadati</taxon>
        <taxon>Pseudomonadota</taxon>
        <taxon>Gammaproteobacteria</taxon>
        <taxon>Enterobacterales</taxon>
        <taxon>Yersiniaceae</taxon>
        <taxon>Yersinia</taxon>
    </lineage>
</organism>
<proteinExistence type="inferred from homology"/>
<protein>
    <recommendedName>
        <fullName evidence="1">Glycine--tRNA ligase alpha subunit</fullName>
        <ecNumber evidence="1">6.1.1.14</ecNumber>
    </recommendedName>
    <alternativeName>
        <fullName evidence="1">Glycyl-tRNA synthetase alpha subunit</fullName>
        <shortName evidence="1">GlyRS</shortName>
    </alternativeName>
</protein>
<comment type="catalytic activity">
    <reaction evidence="1">
        <text>tRNA(Gly) + glycine + ATP = glycyl-tRNA(Gly) + AMP + diphosphate</text>
        <dbReference type="Rhea" id="RHEA:16013"/>
        <dbReference type="Rhea" id="RHEA-COMP:9664"/>
        <dbReference type="Rhea" id="RHEA-COMP:9683"/>
        <dbReference type="ChEBI" id="CHEBI:30616"/>
        <dbReference type="ChEBI" id="CHEBI:33019"/>
        <dbReference type="ChEBI" id="CHEBI:57305"/>
        <dbReference type="ChEBI" id="CHEBI:78442"/>
        <dbReference type="ChEBI" id="CHEBI:78522"/>
        <dbReference type="ChEBI" id="CHEBI:456215"/>
        <dbReference type="EC" id="6.1.1.14"/>
    </reaction>
</comment>
<comment type="subunit">
    <text evidence="1">Tetramer of two alpha and two beta subunits.</text>
</comment>
<comment type="subcellular location">
    <subcellularLocation>
        <location evidence="1">Cytoplasm</location>
    </subcellularLocation>
</comment>
<comment type="similarity">
    <text evidence="1">Belongs to the class-II aminoacyl-tRNA synthetase family.</text>
</comment>
<reference key="1">
    <citation type="journal article" date="2010" name="J. Bacteriol.">
        <title>Genome sequence of the deep-rooted Yersinia pestis strain Angola reveals new insights into the evolution and pangenome of the plague bacterium.</title>
        <authorList>
            <person name="Eppinger M."/>
            <person name="Worsham P.L."/>
            <person name="Nikolich M.P."/>
            <person name="Riley D.R."/>
            <person name="Sebastian Y."/>
            <person name="Mou S."/>
            <person name="Achtman M."/>
            <person name="Lindler L.E."/>
            <person name="Ravel J."/>
        </authorList>
    </citation>
    <scope>NUCLEOTIDE SEQUENCE [LARGE SCALE GENOMIC DNA]</scope>
    <source>
        <strain>Angola</strain>
    </source>
</reference>
<sequence length="304" mass="34758">MQKFDTKTFQGLILTLQDYWARQGCTIVQPLDMEVGAGTSHPMTCLRAIGPEPIAAAYVQPSRRPTDGRYGENPNRLQHYYQFQVIIKPSPDNIQELYLGSLKELGLDPTIHDIRFVEDNWENPTLGAWGLGWEVWLNGMEVTQFTYFQQVGGLECKPVTGEITYGLERLAMYIQGVDSVYDLIWCDGPLGTTTYGDIYHQNEVEQSTYNFEYADVDFLFSCFEQYEKEAQSLLALETPLPLPAYERILKAGHTFNLLDARKAISVTERQRYILRIRTLTKAVAEAYYASREALGFPMCKKNQN</sequence>
<feature type="chain" id="PRO_1000101250" description="Glycine--tRNA ligase alpha subunit">
    <location>
        <begin position="1"/>
        <end position="304"/>
    </location>
</feature>
<keyword id="KW-0030">Aminoacyl-tRNA synthetase</keyword>
<keyword id="KW-0067">ATP-binding</keyword>
<keyword id="KW-0963">Cytoplasm</keyword>
<keyword id="KW-0436">Ligase</keyword>
<keyword id="KW-0547">Nucleotide-binding</keyword>
<keyword id="KW-0648">Protein biosynthesis</keyword>
<name>SYGA_YERPG</name>
<gene>
    <name evidence="1" type="primary">glyQ</name>
    <name type="ordered locus">YpAngola_A3783</name>
</gene>